<proteinExistence type="inferred from homology"/>
<comment type="function">
    <text evidence="1">Catalyzes the reversible isomerization of glucose-6-phosphate to fructose-6-phosphate.</text>
</comment>
<comment type="catalytic activity">
    <reaction evidence="1">
        <text>alpha-D-glucose 6-phosphate = beta-D-fructose 6-phosphate</text>
        <dbReference type="Rhea" id="RHEA:11816"/>
        <dbReference type="ChEBI" id="CHEBI:57634"/>
        <dbReference type="ChEBI" id="CHEBI:58225"/>
        <dbReference type="EC" id="5.3.1.9"/>
    </reaction>
</comment>
<comment type="pathway">
    <text evidence="1">Carbohydrate biosynthesis; gluconeogenesis.</text>
</comment>
<comment type="pathway">
    <text evidence="1">Carbohydrate degradation; glycolysis; D-glyceraldehyde 3-phosphate and glycerone phosphate from D-glucose: step 2/4.</text>
</comment>
<comment type="subcellular location">
    <subcellularLocation>
        <location evidence="1">Cytoplasm</location>
    </subcellularLocation>
</comment>
<comment type="similarity">
    <text evidence="1">Belongs to the GPI family.</text>
</comment>
<sequence length="555" mass="61467">MNDTKDNKVYSSARHSKYWQQLQTLAESPWSLAALFAQDNTRTQHFSMQAGALYMDYSKQCIDDAVLENLLNLANSCELAARIQSLLQGAMVNTSEERAALHTALRLPATASLQLDTQDVVADVHQSLLQVERLSERVRSGTWRGFSGQAITDVVNIGVGGSDLGPLMATTALDEWADTCVEVHFVSNMDGTQLDNLLKHLNPETTLFIISSKSFGTVDTLSNAKTALSWLLATAKLRAGTEDSVRRRHFIGISANGQKMSAWGIHPEHQLQLWEWVGGRFSLWSAIGLAIAIRIGMSGFKELLAGAHSMDDHFAQADFAKNVPVLLGLIAVWNSTFLQVNAHTVLPYDGRLSYLPSYLTQLEMESNGKSVTQHGDRIDYDTCPILWGEIGSNAQHAFYQLLHQGTQQVSCDFIACVRRYSDEAKNTPLQQQHELSLANCLAQSRVLAFGNAAIAESDGQVACDADKYKYYRGNQPSTTLLLDELTPHSLGALIALYEHKVYVMASIWDINPFDQWGVEMGKQMAESVHDAMQQERGAQFDTSTNQLLKHIKELS</sequence>
<accession>Q4FVH5</accession>
<name>G6PI_PSYA2</name>
<keyword id="KW-0963">Cytoplasm</keyword>
<keyword id="KW-0312">Gluconeogenesis</keyword>
<keyword id="KW-0324">Glycolysis</keyword>
<keyword id="KW-0413">Isomerase</keyword>
<keyword id="KW-1185">Reference proteome</keyword>
<evidence type="ECO:0000255" key="1">
    <source>
        <dbReference type="HAMAP-Rule" id="MF_00473"/>
    </source>
</evidence>
<gene>
    <name evidence="1" type="primary">pgi</name>
    <name type="ordered locus">Psyc_0109</name>
</gene>
<feature type="chain" id="PRO_0000180716" description="Glucose-6-phosphate isomerase">
    <location>
        <begin position="1"/>
        <end position="555"/>
    </location>
</feature>
<feature type="active site" description="Proton donor" evidence="1">
    <location>
        <position position="365"/>
    </location>
</feature>
<feature type="active site" evidence="1">
    <location>
        <position position="396"/>
    </location>
</feature>
<feature type="active site" evidence="1">
    <location>
        <position position="522"/>
    </location>
</feature>
<reference key="1">
    <citation type="journal article" date="2010" name="Appl. Environ. Microbiol.">
        <title>The genome sequence of Psychrobacter arcticus 273-4, a psychroactive Siberian permafrost bacterium, reveals mechanisms for adaptation to low-temperature growth.</title>
        <authorList>
            <person name="Ayala-del-Rio H.L."/>
            <person name="Chain P.S."/>
            <person name="Grzymski J.J."/>
            <person name="Ponder M.A."/>
            <person name="Ivanova N."/>
            <person name="Bergholz P.W."/>
            <person name="Di Bartolo G."/>
            <person name="Hauser L."/>
            <person name="Land M."/>
            <person name="Bakermans C."/>
            <person name="Rodrigues D."/>
            <person name="Klappenbach J."/>
            <person name="Zarka D."/>
            <person name="Larimer F."/>
            <person name="Richardson P."/>
            <person name="Murray A."/>
            <person name="Thomashow M."/>
            <person name="Tiedje J.M."/>
        </authorList>
    </citation>
    <scope>NUCLEOTIDE SEQUENCE [LARGE SCALE GENOMIC DNA]</scope>
    <source>
        <strain>DSM 17307 / VKM B-2377 / 273-4</strain>
    </source>
</reference>
<protein>
    <recommendedName>
        <fullName evidence="1">Glucose-6-phosphate isomerase</fullName>
        <shortName evidence="1">GPI</shortName>
        <ecNumber evidence="1">5.3.1.9</ecNumber>
    </recommendedName>
    <alternativeName>
        <fullName evidence="1">Phosphoglucose isomerase</fullName>
        <shortName evidence="1">PGI</shortName>
    </alternativeName>
    <alternativeName>
        <fullName evidence="1">Phosphohexose isomerase</fullName>
        <shortName evidence="1">PHI</shortName>
    </alternativeName>
</protein>
<dbReference type="EC" id="5.3.1.9" evidence="1"/>
<dbReference type="EMBL" id="CP000082">
    <property type="protein sequence ID" value="AAZ17983.1"/>
    <property type="molecule type" value="Genomic_DNA"/>
</dbReference>
<dbReference type="RefSeq" id="WP_011279422.1">
    <property type="nucleotide sequence ID" value="NC_007204.1"/>
</dbReference>
<dbReference type="SMR" id="Q4FVH5"/>
<dbReference type="STRING" id="259536.Psyc_0109"/>
<dbReference type="KEGG" id="par:Psyc_0109"/>
<dbReference type="eggNOG" id="COG0166">
    <property type="taxonomic scope" value="Bacteria"/>
</dbReference>
<dbReference type="HOGENOM" id="CLU_017947_3_1_6"/>
<dbReference type="OrthoDB" id="140919at2"/>
<dbReference type="UniPathway" id="UPA00109">
    <property type="reaction ID" value="UER00181"/>
</dbReference>
<dbReference type="UniPathway" id="UPA00138"/>
<dbReference type="Proteomes" id="UP000000546">
    <property type="component" value="Chromosome"/>
</dbReference>
<dbReference type="GO" id="GO:0005829">
    <property type="term" value="C:cytosol"/>
    <property type="evidence" value="ECO:0007669"/>
    <property type="project" value="TreeGrafter"/>
</dbReference>
<dbReference type="GO" id="GO:0097367">
    <property type="term" value="F:carbohydrate derivative binding"/>
    <property type="evidence" value="ECO:0007669"/>
    <property type="project" value="InterPro"/>
</dbReference>
<dbReference type="GO" id="GO:0004347">
    <property type="term" value="F:glucose-6-phosphate isomerase activity"/>
    <property type="evidence" value="ECO:0007669"/>
    <property type="project" value="UniProtKB-UniRule"/>
</dbReference>
<dbReference type="GO" id="GO:0048029">
    <property type="term" value="F:monosaccharide binding"/>
    <property type="evidence" value="ECO:0007669"/>
    <property type="project" value="TreeGrafter"/>
</dbReference>
<dbReference type="GO" id="GO:0006094">
    <property type="term" value="P:gluconeogenesis"/>
    <property type="evidence" value="ECO:0007669"/>
    <property type="project" value="UniProtKB-UniRule"/>
</dbReference>
<dbReference type="GO" id="GO:0051156">
    <property type="term" value="P:glucose 6-phosphate metabolic process"/>
    <property type="evidence" value="ECO:0007669"/>
    <property type="project" value="TreeGrafter"/>
</dbReference>
<dbReference type="GO" id="GO:0006096">
    <property type="term" value="P:glycolytic process"/>
    <property type="evidence" value="ECO:0007669"/>
    <property type="project" value="UniProtKB-UniRule"/>
</dbReference>
<dbReference type="CDD" id="cd05015">
    <property type="entry name" value="SIS_PGI_1"/>
    <property type="match status" value="1"/>
</dbReference>
<dbReference type="CDD" id="cd05016">
    <property type="entry name" value="SIS_PGI_2"/>
    <property type="match status" value="1"/>
</dbReference>
<dbReference type="Gene3D" id="1.10.1390.10">
    <property type="match status" value="1"/>
</dbReference>
<dbReference type="Gene3D" id="3.40.50.10490">
    <property type="entry name" value="Glucose-6-phosphate isomerase like protein, domain 1"/>
    <property type="match status" value="2"/>
</dbReference>
<dbReference type="HAMAP" id="MF_00473">
    <property type="entry name" value="G6P_isomerase"/>
    <property type="match status" value="1"/>
</dbReference>
<dbReference type="InterPro" id="IPR001672">
    <property type="entry name" value="G6P_Isomerase"/>
</dbReference>
<dbReference type="InterPro" id="IPR023096">
    <property type="entry name" value="G6P_Isomerase_C"/>
</dbReference>
<dbReference type="InterPro" id="IPR018189">
    <property type="entry name" value="Phosphoglucose_isomerase_CS"/>
</dbReference>
<dbReference type="InterPro" id="IPR046348">
    <property type="entry name" value="SIS_dom_sf"/>
</dbReference>
<dbReference type="InterPro" id="IPR035476">
    <property type="entry name" value="SIS_PGI_1"/>
</dbReference>
<dbReference type="InterPro" id="IPR035482">
    <property type="entry name" value="SIS_PGI_2"/>
</dbReference>
<dbReference type="NCBIfam" id="NF001211">
    <property type="entry name" value="PRK00179.1"/>
    <property type="match status" value="1"/>
</dbReference>
<dbReference type="PANTHER" id="PTHR11469">
    <property type="entry name" value="GLUCOSE-6-PHOSPHATE ISOMERASE"/>
    <property type="match status" value="1"/>
</dbReference>
<dbReference type="PANTHER" id="PTHR11469:SF1">
    <property type="entry name" value="GLUCOSE-6-PHOSPHATE ISOMERASE"/>
    <property type="match status" value="1"/>
</dbReference>
<dbReference type="Pfam" id="PF00342">
    <property type="entry name" value="PGI"/>
    <property type="match status" value="1"/>
</dbReference>
<dbReference type="PRINTS" id="PR00662">
    <property type="entry name" value="G6PISOMERASE"/>
</dbReference>
<dbReference type="SUPFAM" id="SSF53697">
    <property type="entry name" value="SIS domain"/>
    <property type="match status" value="1"/>
</dbReference>
<dbReference type="PROSITE" id="PS00765">
    <property type="entry name" value="P_GLUCOSE_ISOMERASE_1"/>
    <property type="match status" value="1"/>
</dbReference>
<dbReference type="PROSITE" id="PS00174">
    <property type="entry name" value="P_GLUCOSE_ISOMERASE_2"/>
    <property type="match status" value="1"/>
</dbReference>
<dbReference type="PROSITE" id="PS51463">
    <property type="entry name" value="P_GLUCOSE_ISOMERASE_3"/>
    <property type="match status" value="1"/>
</dbReference>
<organism>
    <name type="scientific">Psychrobacter arcticus (strain DSM 17307 / VKM B-2377 / 273-4)</name>
    <dbReference type="NCBI Taxonomy" id="259536"/>
    <lineage>
        <taxon>Bacteria</taxon>
        <taxon>Pseudomonadati</taxon>
        <taxon>Pseudomonadota</taxon>
        <taxon>Gammaproteobacteria</taxon>
        <taxon>Moraxellales</taxon>
        <taxon>Moraxellaceae</taxon>
        <taxon>Psychrobacter</taxon>
    </lineage>
</organism>